<sequence>MFELDKDTFETEVLQGTGYVLVDFWSEGCEPCKALMPDIQEMEKTYGEQVRFTKLDTTKARRLAIKEKVLGLPTIAIYKDGQKIDELTKEDATAANVEAMVKKYI</sequence>
<keyword id="KW-0903">Direct protein sequencing</keyword>
<keyword id="KW-1015">Disulfide bond</keyword>
<keyword id="KW-0249">Electron transport</keyword>
<keyword id="KW-0676">Redox-active center</keyword>
<keyword id="KW-1185">Reference proteome</keyword>
<keyword id="KW-0813">Transport</keyword>
<feature type="chain" id="PRO_0000120092" description="Thioredoxin">
    <location>
        <begin position="1"/>
        <end position="105"/>
    </location>
</feature>
<feature type="domain" description="Thioredoxin" evidence="1">
    <location>
        <begin position="1"/>
        <end position="105"/>
    </location>
</feature>
<feature type="disulfide bond" description="Redox-active" evidence="1">
    <location>
        <begin position="29"/>
        <end position="32"/>
    </location>
</feature>
<proteinExistence type="evidence at protein level"/>
<protein>
    <recommendedName>
        <fullName>Thioredoxin</fullName>
        <shortName>Trx</shortName>
    </recommendedName>
</protein>
<comment type="function">
    <text>Participates in various redox reactions through the reversible oxidation of its active center dithiol to a disulfide and catalyzes dithiol-disulfide exchange reactions.</text>
</comment>
<comment type="similarity">
    <text evidence="2">Belongs to the thioredoxin family.</text>
</comment>
<evidence type="ECO:0000255" key="1">
    <source>
        <dbReference type="PROSITE-ProRule" id="PRU00691"/>
    </source>
</evidence>
<evidence type="ECO:0000305" key="2"/>
<gene>
    <name type="primary">trxA</name>
    <name type="ordered locus">CLOST_1109</name>
</gene>
<organism>
    <name type="scientific">Acetoanaerobium sticklandii (strain ATCC 12662 / DSM 519 / JCM 1433 / CCUG 9281 / NCIMB 10654 / HF)</name>
    <name type="common">Clostridium sticklandii</name>
    <dbReference type="NCBI Taxonomy" id="499177"/>
    <lineage>
        <taxon>Bacteria</taxon>
        <taxon>Bacillati</taxon>
        <taxon>Bacillota</taxon>
        <taxon>Clostridia</taxon>
        <taxon>Peptostreptococcales</taxon>
        <taxon>Filifactoraceae</taxon>
        <taxon>Acetoanaerobium</taxon>
    </lineage>
</organism>
<accession>P81109</accession>
<accession>Q9EV95</accession>
<reference key="1">
    <citation type="journal article" date="2001" name="Arch. Microbiol.">
        <title>Molecular analysis of the grd-operon encoded proteins of the glycine reductase and thioredoxin system from Clostridium sticklandii.</title>
        <authorList>
            <person name="Graentzdoerffer A."/>
            <person name="Pich A."/>
            <person name="Andreesen J.R."/>
        </authorList>
    </citation>
    <scope>NUCLEOTIDE SEQUENCE [GENOMIC DNA]</scope>
    <source>
        <strain>ATCC 12662 / DSM 519 / JCM 1433 / CCUG 9281 / NCIMB 10654 / HF</strain>
    </source>
</reference>
<reference key="2">
    <citation type="journal article" date="2010" name="BMC Genomics">
        <title>Clostridium sticklandii, a specialist in amino acid degradation:revisiting its metabolism through its genome sequence.</title>
        <authorList>
            <person name="Fonknechten N."/>
            <person name="Chaussonnerie S."/>
            <person name="Tricot S."/>
            <person name="Lajus A."/>
            <person name="Andreesen J.R."/>
            <person name="Perchat N."/>
            <person name="Pelletier E."/>
            <person name="Gouyvenoux M."/>
            <person name="Barbe V."/>
            <person name="Salanoubat M."/>
            <person name="Le Paslier D."/>
            <person name="Weissenbach J."/>
            <person name="Cohen G.N."/>
            <person name="Kreimeyer A."/>
        </authorList>
    </citation>
    <scope>NUCLEOTIDE SEQUENCE [LARGE SCALE GENOMIC DNA]</scope>
    <source>
        <strain>ATCC 12662 / DSM 519 / JCM 1433 / CCUG 9281 / NCIMB 10654 / HF</strain>
    </source>
</reference>
<reference key="3">
    <citation type="journal article" date="1998" name="Microbiology">
        <title>Fast purification of thioredoxin reductases and of thioredoxins with an unusual redox-active centre from anaerobic, amino-acid-utilizing bacteria.</title>
        <authorList>
            <person name="Harms C."/>
            <person name="Meyer M.A."/>
            <person name="Andreesen J.R."/>
        </authorList>
    </citation>
    <scope>PROTEIN SEQUENCE OF 1-33</scope>
    <source>
        <strain>ATCC 12662 / DSM 519 / JCM 1433 / CCUG 9281 / NCIMB 10654 / HF</strain>
    </source>
</reference>
<name>THIO_ACESD</name>
<dbReference type="EMBL" id="AJ276209">
    <property type="protein sequence ID" value="CAC14298.1"/>
    <property type="molecule type" value="Genomic_DNA"/>
</dbReference>
<dbReference type="EMBL" id="FP565809">
    <property type="protein sequence ID" value="CBH21231.1"/>
    <property type="molecule type" value="Genomic_DNA"/>
</dbReference>
<dbReference type="SMR" id="P81109"/>
<dbReference type="STRING" id="1511.CLOST_1109"/>
<dbReference type="KEGG" id="cst:CLOST_1109"/>
<dbReference type="eggNOG" id="COG3118">
    <property type="taxonomic scope" value="Bacteria"/>
</dbReference>
<dbReference type="HOGENOM" id="CLU_090389_10_2_9"/>
<dbReference type="Proteomes" id="UP000007041">
    <property type="component" value="Chromosome"/>
</dbReference>
<dbReference type="GO" id="GO:0005737">
    <property type="term" value="C:cytoplasm"/>
    <property type="evidence" value="ECO:0007669"/>
    <property type="project" value="TreeGrafter"/>
</dbReference>
<dbReference type="GO" id="GO:0015035">
    <property type="term" value="F:protein-disulfide reductase activity"/>
    <property type="evidence" value="ECO:0007669"/>
    <property type="project" value="InterPro"/>
</dbReference>
<dbReference type="CDD" id="cd02947">
    <property type="entry name" value="TRX_family"/>
    <property type="match status" value="1"/>
</dbReference>
<dbReference type="Gene3D" id="3.40.30.10">
    <property type="entry name" value="Glutaredoxin"/>
    <property type="match status" value="1"/>
</dbReference>
<dbReference type="InterPro" id="IPR005746">
    <property type="entry name" value="Thioredoxin"/>
</dbReference>
<dbReference type="InterPro" id="IPR036249">
    <property type="entry name" value="Thioredoxin-like_sf"/>
</dbReference>
<dbReference type="InterPro" id="IPR017937">
    <property type="entry name" value="Thioredoxin_CS"/>
</dbReference>
<dbReference type="InterPro" id="IPR013766">
    <property type="entry name" value="Thioredoxin_domain"/>
</dbReference>
<dbReference type="NCBIfam" id="NF047697">
    <property type="entry name" value="ThioredTrxAClost"/>
    <property type="match status" value="1"/>
</dbReference>
<dbReference type="PANTHER" id="PTHR45663">
    <property type="entry name" value="GEO12009P1"/>
    <property type="match status" value="1"/>
</dbReference>
<dbReference type="PANTHER" id="PTHR45663:SF11">
    <property type="entry name" value="GEO12009P1"/>
    <property type="match status" value="1"/>
</dbReference>
<dbReference type="Pfam" id="PF00085">
    <property type="entry name" value="Thioredoxin"/>
    <property type="match status" value="1"/>
</dbReference>
<dbReference type="PIRSF" id="PIRSF000077">
    <property type="entry name" value="Thioredoxin"/>
    <property type="match status" value="1"/>
</dbReference>
<dbReference type="SUPFAM" id="SSF52833">
    <property type="entry name" value="Thioredoxin-like"/>
    <property type="match status" value="1"/>
</dbReference>
<dbReference type="PROSITE" id="PS00194">
    <property type="entry name" value="THIOREDOXIN_1"/>
    <property type="match status" value="1"/>
</dbReference>
<dbReference type="PROSITE" id="PS51352">
    <property type="entry name" value="THIOREDOXIN_2"/>
    <property type="match status" value="1"/>
</dbReference>